<feature type="initiator methionine" description="Removed; by host" evidence="1">
    <location>
        <position position="1"/>
    </location>
</feature>
<feature type="chain" id="PRO_0000261240" description="Gag polyprotein">
    <location>
        <begin position="2"/>
        <end position="521"/>
    </location>
</feature>
<feature type="chain" id="PRO_0000038601" description="Matrix protein p17" evidence="1">
    <location>
        <begin position="2"/>
        <end position="135"/>
    </location>
</feature>
<feature type="chain" id="PRO_0000038602" description="Capsid protein p24" evidence="1">
    <location>
        <begin position="136"/>
        <end position="365"/>
    </location>
</feature>
<feature type="peptide" id="PRO_0000042063" description="Spacer peptide 1" evidence="1">
    <location>
        <begin position="366"/>
        <end position="382"/>
    </location>
</feature>
<feature type="chain" id="PRO_0000042064" description="Nucleocapsid protein p7" evidence="1">
    <location>
        <begin position="383"/>
        <end position="431"/>
    </location>
</feature>
<feature type="peptide" id="PRO_0000042065" description="Spacer peptide 2" evidence="1">
    <location>
        <begin position="432"/>
        <end position="445"/>
    </location>
</feature>
<feature type="chain" id="PRO_0000042066" description="p6-gag" evidence="1">
    <location>
        <begin position="446"/>
        <end position="521"/>
    </location>
</feature>
<feature type="zinc finger region" description="CCHC-type 1" evidence="8">
    <location>
        <begin position="389"/>
        <end position="406"/>
    </location>
</feature>
<feature type="zinc finger region" description="CCHC-type 2" evidence="8">
    <location>
        <begin position="410"/>
        <end position="427"/>
    </location>
</feature>
<feature type="region of interest" description="Interaction with Gp41" evidence="6">
    <location>
        <begin position="7"/>
        <end position="31"/>
    </location>
</feature>
<feature type="region of interest" description="Interaction with host CALM1" evidence="5">
    <location>
        <begin position="8"/>
        <end position="43"/>
    </location>
</feature>
<feature type="region of interest" description="Interaction with host AP3D1" evidence="7">
    <location>
        <begin position="12"/>
        <end position="19"/>
    </location>
</feature>
<feature type="region of interest" description="Interaction with membrane phosphatidylinositol 4,5-bisphosphate and RNA" evidence="6">
    <location>
        <begin position="14"/>
        <end position="33"/>
    </location>
</feature>
<feature type="region of interest" description="Interaction with membrane phosphatidylinositol 4,5-bisphosphate" evidence="6">
    <location>
        <begin position="73"/>
        <end position="77"/>
    </location>
</feature>
<feature type="region of interest" description="Disordered" evidence="9">
    <location>
        <begin position="110"/>
        <end position="136"/>
    </location>
</feature>
<feature type="region of interest" description="Interaction with host PPIA/CYPA and NUP153" evidence="6">
    <location>
        <begin position="191"/>
        <end position="228"/>
    </location>
</feature>
<feature type="region of interest" description="PPIA/CYPA-binding loop" evidence="5">
    <location>
        <begin position="219"/>
        <end position="226"/>
    </location>
</feature>
<feature type="region of interest" description="Dimerization/Multimerization of capsid protein p24" evidence="5">
    <location>
        <begin position="279"/>
        <end position="365"/>
    </location>
</feature>
<feature type="region of interest" description="Disordered" evidence="9">
    <location>
        <begin position="474"/>
        <end position="521"/>
    </location>
</feature>
<feature type="short sequence motif" description="Nuclear export signal" evidence="1">
    <location>
        <begin position="16"/>
        <end position="22"/>
    </location>
</feature>
<feature type="short sequence motif" description="Nuclear localization signal" evidence="1">
    <location>
        <begin position="26"/>
        <end position="32"/>
    </location>
</feature>
<feature type="short sequence motif" description="PTAP/PSAP motif">
    <location>
        <begin position="456"/>
        <end position="459"/>
    </location>
</feature>
<feature type="compositionally biased region" description="Basic and acidic residues" evidence="9">
    <location>
        <begin position="477"/>
        <end position="511"/>
    </location>
</feature>
<feature type="site" description="Cleavage; by viral protease" evidence="1">
    <location>
        <begin position="135"/>
        <end position="136"/>
    </location>
</feature>
<feature type="site" description="Cleavage; by viral protease" evidence="1">
    <location>
        <begin position="365"/>
        <end position="366"/>
    </location>
</feature>
<feature type="site" description="Cleavage; by viral protease" evidence="1">
    <location>
        <begin position="382"/>
        <end position="383"/>
    </location>
</feature>
<feature type="site" description="Cleavage; by viral protease" evidence="1">
    <location>
        <begin position="431"/>
        <end position="432"/>
    </location>
</feature>
<feature type="site" description="Cleavage; by viral protease" evidence="1">
    <location>
        <begin position="445"/>
        <end position="446"/>
    </location>
</feature>
<feature type="modified residue" description="Phosphoserine; by host MAPK1" evidence="6">
    <location>
        <position position="150"/>
    </location>
</feature>
<feature type="lipid moiety-binding region" description="N-myristoyl glycine; by host" evidence="1">
    <location>
        <position position="2"/>
    </location>
</feature>
<feature type="mutagenesis site" description="Decreased interaction with human NONO." evidence="10">
    <original>Y</original>
    <variation>A</variation>
    <location>
        <position position="184"/>
    </location>
</feature>
<feature type="mutagenesis site" description="Strongly decreased interaction with human NONO." evidence="10">
    <original>DI</original>
    <variation>AA</variation>
    <location>
        <begin position="236"/>
        <end position="237"/>
    </location>
</feature>
<gene>
    <name type="primary">gag</name>
</gene>
<organismHost>
    <name type="scientific">Homo sapiens</name>
    <name type="common">Human</name>
    <dbReference type="NCBI Taxonomy" id="9606"/>
</organismHost>
<protein>
    <recommendedName>
        <fullName>Gag polyprotein</fullName>
    </recommendedName>
    <alternativeName>
        <fullName>Pr55Gag</fullName>
    </alternativeName>
    <component>
        <recommendedName>
            <fullName>Matrix protein p17</fullName>
            <shortName>MA</shortName>
        </recommendedName>
    </component>
    <component>
        <recommendedName>
            <fullName>Capsid protein p24</fullName>
            <shortName>CA</shortName>
        </recommendedName>
    </component>
    <component>
        <recommendedName>
            <fullName evidence="6">Spacer peptide 1</fullName>
            <shortName>SP1</shortName>
        </recommendedName>
        <alternativeName>
            <fullName>p2</fullName>
        </alternativeName>
    </component>
    <component>
        <recommendedName>
            <fullName>Nucleocapsid protein p7</fullName>
            <shortName>NC</shortName>
        </recommendedName>
    </component>
    <component>
        <recommendedName>
            <fullName evidence="6">Spacer peptide 2</fullName>
            <shortName>SP2</shortName>
        </recommendedName>
        <alternativeName>
            <fullName>p1</fullName>
        </alternativeName>
    </component>
    <component>
        <recommendedName>
            <fullName>p6-gag</fullName>
        </recommendedName>
    </component>
</protein>
<name>GAG_HV2BE</name>
<organism>
    <name type="scientific">Human immunodeficiency virus type 2 subtype A (isolate BEN)</name>
    <name type="common">HIV-2</name>
    <dbReference type="NCBI Taxonomy" id="11714"/>
    <lineage>
        <taxon>Viruses</taxon>
        <taxon>Riboviria</taxon>
        <taxon>Pararnavirae</taxon>
        <taxon>Artverviricota</taxon>
        <taxon>Revtraviricetes</taxon>
        <taxon>Ortervirales</taxon>
        <taxon>Retroviridae</taxon>
        <taxon>Orthoretrovirinae</taxon>
        <taxon>Lentivirus</taxon>
        <taxon>Human immunodeficiency virus 2</taxon>
    </lineage>
</organism>
<reference key="1">
    <citation type="journal article" date="1990" name="Virology">
        <title>A novel proviral clone of HIV-2: biological and phylogenetic relationship to other primate immunodeficiency viruses.</title>
        <authorList>
            <person name="Kirchhoff F."/>
            <person name="Jentsch K."/>
            <person name="Bachmann B."/>
            <person name="Stuke A."/>
            <person name="Laloux C."/>
            <person name="Lueke W."/>
            <person name="Stahl-Henning C."/>
            <person name="Schneider J."/>
            <person name="Nieselt K."/>
            <person name="Eigen M."/>
            <person name="Hunsmann G."/>
        </authorList>
    </citation>
    <scope>NUCLEOTIDE SEQUENCE [GENOMIC DNA]</scope>
</reference>
<reference key="2">
    <citation type="journal article" date="2018" name="Cell">
        <title>NONO detects the nuclear HIV capsid to promote cGAS-mediated innate immune activation.</title>
        <authorList>
            <person name="Lahaye X."/>
            <person name="Gentili M."/>
            <person name="Silvin A."/>
            <person name="Conrad C."/>
            <person name="Picard L."/>
            <person name="Jouve M."/>
            <person name="Zueva E."/>
            <person name="Maurin M."/>
            <person name="Nadalin F."/>
            <person name="Knott G.J."/>
            <person name="Zhao B."/>
            <person name="Du F."/>
            <person name="Rio M."/>
            <person name="Amiel J."/>
            <person name="Fox A.H."/>
            <person name="Li P."/>
            <person name="Etienne L."/>
            <person name="Bond C.S."/>
            <person name="Colleaux L."/>
            <person name="Manel N."/>
        </authorList>
    </citation>
    <scope>FUNCTION (CAPSID PROTEIN P24)</scope>
    <scope>INTERACTION WITH HUMAN NONO (CAPSID PROTEIN P24)</scope>
    <scope>MUTAGENESIS OF TYR-184 AND 236-ASP-ILE-237</scope>
</reference>
<accession>P18095</accession>
<sequence length="521" mass="58364">MGARNSVLRGKKADELEKVRLRPGGKKKYRLKHIVWAANELDKFGLAESLLESKEGCQKILRVLDPLVPTGSENLKSLFNTVCVIWCLHAEEKVKDTEEAKKLAQRHLVAETGTAEKMPNTSRPTAPPSGKRGNYPVQQAGGNYVHVPLSPRTLNAWVKLVEEKKFGAEVVPGFQALSEGCTPYDINQMLNCVGDHQAAMQIIREIINEEAADWDSQHPIPGPLPAGQLRDPRGSDIAGTTSTVDEQIQWMYRPQNPVPVGNIYRRWIQIGLQKCVRKYNPTNILDIKQGPKEPFQSYVDRFYKSLRAEQTDPAVKNWMTQTLLIQNANPDCKLVLKGLGMNPTLEEMLTACQGVGGPGQKARLMAEALKEAMGPSPIPFAAAQQRKAIRYWNCGKEGHSARQCRAPRRQGCWKCGKPGHIMANCPERQAGFLGLGPRGKKPRNFPVTQAPQGLIPTAPPADPAAELLERYMQQGRKQREQRERPYKEVTEDLLHLEQRETPHREETEDLLHLNSLFGKDQ</sequence>
<keyword id="KW-0002">3D-structure</keyword>
<keyword id="KW-0014">AIDS</keyword>
<keyword id="KW-0167">Capsid protein</keyword>
<keyword id="KW-1032">Host cell membrane</keyword>
<keyword id="KW-1035">Host cytoplasm</keyword>
<keyword id="KW-1039">Host endosome</keyword>
<keyword id="KW-1043">Host membrane</keyword>
<keyword id="KW-1048">Host nucleus</keyword>
<keyword id="KW-0945">Host-virus interaction</keyword>
<keyword id="KW-0449">Lipoprotein</keyword>
<keyword id="KW-0472">Membrane</keyword>
<keyword id="KW-0479">Metal-binding</keyword>
<keyword id="KW-0519">Myristate</keyword>
<keyword id="KW-0597">Phosphoprotein</keyword>
<keyword id="KW-1185">Reference proteome</keyword>
<keyword id="KW-0677">Repeat</keyword>
<keyword id="KW-0688">Ribosomal frameshifting</keyword>
<keyword id="KW-0694">RNA-binding</keyword>
<keyword id="KW-1198">Viral budding</keyword>
<keyword id="KW-1187">Viral budding via the host ESCRT complexes</keyword>
<keyword id="KW-0543">Viral nucleoprotein</keyword>
<keyword id="KW-1188">Viral release from host cell</keyword>
<keyword id="KW-0946">Virion</keyword>
<keyword id="KW-0862">Zinc</keyword>
<keyword id="KW-0863">Zinc-finger</keyword>
<dbReference type="EMBL" id="M30502">
    <property type="protein sequence ID" value="AAB00736.1"/>
    <property type="molecule type" value="Genomic_DNA"/>
</dbReference>
<dbReference type="PDB" id="8W52">
    <property type="method" value="X-ray"/>
    <property type="resolution" value="2.38 A"/>
    <property type="chains" value="A/B/C/D/E/F/G/H/I/J/K/L/M/N/O/P=1-135"/>
</dbReference>
<dbReference type="PDBsum" id="8W52"/>
<dbReference type="SMR" id="P18095"/>
<dbReference type="BioGRID" id="1205547">
    <property type="interactions" value="4"/>
</dbReference>
<dbReference type="ELM" id="P18095"/>
<dbReference type="IntAct" id="P18095">
    <property type="interactions" value="9"/>
</dbReference>
<dbReference type="PRO" id="PR:P18095"/>
<dbReference type="Proteomes" id="UP000002242">
    <property type="component" value="Segment"/>
</dbReference>
<dbReference type="GO" id="GO:0042025">
    <property type="term" value="C:host cell nucleus"/>
    <property type="evidence" value="ECO:0007669"/>
    <property type="project" value="UniProtKB-SubCell"/>
</dbReference>
<dbReference type="GO" id="GO:0020002">
    <property type="term" value="C:host cell plasma membrane"/>
    <property type="evidence" value="ECO:0007669"/>
    <property type="project" value="UniProtKB-SubCell"/>
</dbReference>
<dbReference type="GO" id="GO:0072494">
    <property type="term" value="C:host multivesicular body"/>
    <property type="evidence" value="ECO:0007669"/>
    <property type="project" value="UniProtKB-SubCell"/>
</dbReference>
<dbReference type="GO" id="GO:0016020">
    <property type="term" value="C:membrane"/>
    <property type="evidence" value="ECO:0007669"/>
    <property type="project" value="UniProtKB-KW"/>
</dbReference>
<dbReference type="GO" id="GO:0019013">
    <property type="term" value="C:viral nucleocapsid"/>
    <property type="evidence" value="ECO:0007669"/>
    <property type="project" value="UniProtKB-KW"/>
</dbReference>
<dbReference type="GO" id="GO:0055036">
    <property type="term" value="C:virion membrane"/>
    <property type="evidence" value="ECO:0007669"/>
    <property type="project" value="UniProtKB-SubCell"/>
</dbReference>
<dbReference type="GO" id="GO:0003723">
    <property type="term" value="F:RNA binding"/>
    <property type="evidence" value="ECO:0007669"/>
    <property type="project" value="UniProtKB-KW"/>
</dbReference>
<dbReference type="GO" id="GO:0005198">
    <property type="term" value="F:structural molecule activity"/>
    <property type="evidence" value="ECO:0007669"/>
    <property type="project" value="InterPro"/>
</dbReference>
<dbReference type="GO" id="GO:0008270">
    <property type="term" value="F:zinc ion binding"/>
    <property type="evidence" value="ECO:0007669"/>
    <property type="project" value="UniProtKB-KW"/>
</dbReference>
<dbReference type="GO" id="GO:0039702">
    <property type="term" value="P:viral budding via host ESCRT complex"/>
    <property type="evidence" value="ECO:0007669"/>
    <property type="project" value="UniProtKB-KW"/>
</dbReference>
<dbReference type="GO" id="GO:0075523">
    <property type="term" value="P:viral translational frameshifting"/>
    <property type="evidence" value="ECO:0007669"/>
    <property type="project" value="UniProtKB-KW"/>
</dbReference>
<dbReference type="Gene3D" id="1.10.1200.30">
    <property type="match status" value="1"/>
</dbReference>
<dbReference type="Gene3D" id="1.10.375.10">
    <property type="entry name" value="Human Immunodeficiency Virus Type 1 Capsid Protein"/>
    <property type="match status" value="1"/>
</dbReference>
<dbReference type="Gene3D" id="1.10.150.90">
    <property type="entry name" value="Immunodeficiency lentiviruses, gag gene matrix protein p17"/>
    <property type="match status" value="1"/>
</dbReference>
<dbReference type="Gene3D" id="1.20.5.760">
    <property type="entry name" value="Single helix bin"/>
    <property type="match status" value="1"/>
</dbReference>
<dbReference type="Gene3D" id="4.10.60.10">
    <property type="entry name" value="Zinc finger, CCHC-type"/>
    <property type="match status" value="1"/>
</dbReference>
<dbReference type="InterPro" id="IPR045345">
    <property type="entry name" value="Gag_p24_C"/>
</dbReference>
<dbReference type="InterPro" id="IPR000071">
    <property type="entry name" value="Lentvrl_matrix_N"/>
</dbReference>
<dbReference type="InterPro" id="IPR012344">
    <property type="entry name" value="Matrix_HIV/RSV_N"/>
</dbReference>
<dbReference type="InterPro" id="IPR050195">
    <property type="entry name" value="Primate_lentivir_Gag_pol-like"/>
</dbReference>
<dbReference type="InterPro" id="IPR008916">
    <property type="entry name" value="Retrov_capsid_C"/>
</dbReference>
<dbReference type="InterPro" id="IPR008919">
    <property type="entry name" value="Retrov_capsid_N"/>
</dbReference>
<dbReference type="InterPro" id="IPR010999">
    <property type="entry name" value="Retrovr_matrix"/>
</dbReference>
<dbReference type="InterPro" id="IPR001878">
    <property type="entry name" value="Znf_CCHC"/>
</dbReference>
<dbReference type="InterPro" id="IPR036875">
    <property type="entry name" value="Znf_CCHC_sf"/>
</dbReference>
<dbReference type="PANTHER" id="PTHR40389">
    <property type="entry name" value="ENDOGENOUS RETROVIRUS GROUP K MEMBER 24 GAG POLYPROTEIN-RELATED"/>
    <property type="match status" value="1"/>
</dbReference>
<dbReference type="PANTHER" id="PTHR40389:SF3">
    <property type="entry name" value="IGE-BINDING PROTEIN"/>
    <property type="match status" value="1"/>
</dbReference>
<dbReference type="Pfam" id="PF00540">
    <property type="entry name" value="Gag_p17"/>
    <property type="match status" value="1"/>
</dbReference>
<dbReference type="Pfam" id="PF00607">
    <property type="entry name" value="Gag_p24"/>
    <property type="match status" value="1"/>
</dbReference>
<dbReference type="Pfam" id="PF19317">
    <property type="entry name" value="Gag_p24_C"/>
    <property type="match status" value="1"/>
</dbReference>
<dbReference type="Pfam" id="PF00098">
    <property type="entry name" value="zf-CCHC"/>
    <property type="match status" value="2"/>
</dbReference>
<dbReference type="PRINTS" id="PR00234">
    <property type="entry name" value="HIV1MATRIX"/>
</dbReference>
<dbReference type="SMART" id="SM00343">
    <property type="entry name" value="ZnF_C2HC"/>
    <property type="match status" value="2"/>
</dbReference>
<dbReference type="SUPFAM" id="SSF47836">
    <property type="entry name" value="Retroviral matrix proteins"/>
    <property type="match status" value="1"/>
</dbReference>
<dbReference type="SUPFAM" id="SSF47353">
    <property type="entry name" value="Retrovirus capsid dimerization domain-like"/>
    <property type="match status" value="1"/>
</dbReference>
<dbReference type="SUPFAM" id="SSF47943">
    <property type="entry name" value="Retrovirus capsid protein, N-terminal core domain"/>
    <property type="match status" value="1"/>
</dbReference>
<dbReference type="SUPFAM" id="SSF57756">
    <property type="entry name" value="Retrovirus zinc finger-like domains"/>
    <property type="match status" value="1"/>
</dbReference>
<dbReference type="PROSITE" id="PS50158">
    <property type="entry name" value="ZF_CCHC"/>
    <property type="match status" value="2"/>
</dbReference>
<proteinExistence type="evidence at protein level"/>
<comment type="function">
    <molecule>Gag polyprotein</molecule>
    <text evidence="5">Mediates, with Gag-Pol polyprotein, the essential events in virion assembly, including binding the plasma membrane, making the protein-protein interactions necessary to create spherical particles, recruiting the viral Env proteins, and packaging the genomic RNA via direct interactions with the RNA packaging sequence (Psi).</text>
</comment>
<comment type="function">
    <molecule>Matrix protein p17</molecule>
    <text evidence="1 6">Targets the polyprotein to the plasma membrane via a multipartite membrane-binding signal, that includes its myristoylated N-terminus (By similarity). Matrix protein is part of the pre-integration complex. Implicated in the release from host cell mediated by Vpu. Binds to RNA (By similarity).</text>
</comment>
<comment type="function">
    <molecule>Capsid protein p24</molecule>
    <text evidence="5 6">Forms the conical core that encapsulates the genomic RNA-nucleocapsid complex in the virion (By similarity). Most core are conical, with only 7% tubular (By similarity). The core is constituted by capsid protein hexamer subunits (By similarity). The core is disassembled soon after virion entry (By similarity). Host restriction factors such as TRIM5-alpha or TRIMCyp bind retroviral capsids and cause premature capsid disassembly, leading to blocks in reverse transcription (By similarity). Capsid restriction by TRIM5 is one of the factors which restricts HIV-1 to the human species (By similarity). Host PIN1 apparently facilitates the virion uncoating (By similarity). On the other hand, interactions with PDZD8 or CYPA stabilize the capsid (By similarity). The capsid interacts with high affinity with human NONO, promoting detection of viral DNA by CGAS, leading to CGAS-mediated inmmune activation (PubMed:30270045).</text>
</comment>
<comment type="function">
    <molecule>Nucleocapsid protein p7</molecule>
    <text evidence="5">Encapsulates and protects viral dimeric unspliced genomic RNA (gRNA). Binds these RNAs through its zinc fingers. Acts as a nucleic acid chaperone which is involved in rearangement of nucleic acid secondary structure during gRNA retrotranscription. Also facilitates template switch leading to recombination. As part of the polyprotein, participates in gRNA dimerization, packaging, tRNA incorporation and virion assembly.</text>
</comment>
<comment type="function">
    <molecule>p6-gag</molecule>
    <text evidence="6">Plays a role in budding of the assembled particle by interacting with the host class E VPS proteins TSG101 and PDCD6IP/AIP1.</text>
</comment>
<comment type="subunit">
    <molecule>Gag polyprotein</molecule>
    <text evidence="4 5">Homotrimer; further assembles as hexamers of trimers. Oligomerization possibly creates a central hole into which the cytoplasmic tail of the gp41 envelope protein may be inserted. Interacts with host TRIM22; this interaction seems to disrupt proper trafficking of Gag polyprotein and may interfere with budding. Interacts with host PDZD8. When ubiquitinated, interacts (via p6-gag domain) with host PACSIN2; this interaction allows PACSIN2 recruitment to viral assembly sites and its subsequent incorporation into virions (By similarity).</text>
</comment>
<comment type="subunit">
    <molecule>Matrix protein p17</molecule>
    <text evidence="5 6">Homotrimer; further assembles as hexamers of trimers. Interacts with gp41 (via C-terminus). Interacts with host CALM1; this interaction induces a conformational change in the Matrix protein, triggering exposure of the myristate group. Interacts with host AP3D1; this interaction allows the polyprotein trafficking to multivesicular bodies during virus assembly. Part of the pre-integration complex (PIC) which is composed of viral genome, matrix protein, Vpr and integrase.</text>
</comment>
<comment type="subunit">
    <molecule>Capsid protein p24</molecule>
    <text evidence="5 6 10">Homodimer; the homodimer further multimerizes as homohexamers or homopentamers (By similarity). Interacts with host NUP98 (By similarity). Interacts with host PPIA/CYPA; this interaction stabilizes the capsid (By similarity). Interacts with host NUP153 (By similarity). Interacts with host PDZD8; this interaction stabilizes the capsid. Interacts with host TRIM5; this interaction destabilizes the capsid (By similarity). Interacts with host CPSF6 (By similarity). Interacts with host NONO; the interaction is the interaction is strong and promotes CGAS-mediated immunity (PubMed:30270045).</text>
</comment>
<comment type="subunit">
    <molecule>Nucleocapsid protein p7</molecule>
    <text evidence="6">Interacts with host NUP98.</text>
</comment>
<comment type="subunit">
    <molecule>p6-gag</molecule>
    <text evidence="3 6">Interacts with Vpr; this interaction allows Vpr incorporation into the virion. Interacts with host TSG101. p6-gag interacts with host PDCD6IP/AIP1.</text>
</comment>
<comment type="interaction">
    <interactant intactId="EBI-40205277">
        <id>P18095</id>
    </interactant>
    <interactant intactId="EBI-346882">
        <id>Q99816</id>
        <label>TSG101</label>
    </interactant>
    <organismsDiffer>true</organismsDiffer>
    <experiments>11</experiments>
</comment>
<comment type="subcellular location">
    <molecule>Gag polyprotein</molecule>
    <subcellularLocation>
        <location evidence="6">Host cell membrane</location>
        <topology evidence="6">Lipid-anchor</topology>
    </subcellularLocation>
    <subcellularLocation>
        <location evidence="6">Host endosome</location>
        <location evidence="6">Host multivesicular body</location>
    </subcellularLocation>
    <text evidence="6">These locations are probably linked to virus assembly sites. The main location is the cell membrane, but under some circumstances, late endosomal compartments can serve as productive sites for virion assembly.</text>
</comment>
<comment type="subcellular location">
    <molecule>Matrix protein p17</molecule>
    <subcellularLocation>
        <location evidence="6">Virion membrane</location>
        <topology evidence="6">Lipid-anchor</topology>
    </subcellularLocation>
    <subcellularLocation>
        <location evidence="1">Host nucleus</location>
    </subcellularLocation>
    <subcellularLocation>
        <location evidence="1">Host cytoplasm</location>
    </subcellularLocation>
</comment>
<comment type="subcellular location">
    <molecule>Capsid protein p24</molecule>
    <subcellularLocation>
        <location evidence="6">Virion</location>
    </subcellularLocation>
</comment>
<comment type="subcellular location">
    <molecule>Nucleocapsid protein p7</molecule>
    <subcellularLocation>
        <location evidence="6">Virion</location>
    </subcellularLocation>
</comment>
<comment type="alternative products">
    <event type="ribosomal frameshifting"/>
    <isoform>
        <id>P18095-1</id>
        <name>Gag polyprotein</name>
        <sequence type="displayed"/>
    </isoform>
    <isoform>
        <id>P18096-1</id>
        <name>Gag-Pol polyprotein</name>
        <sequence type="external"/>
    </isoform>
    <text>Translation results in the formation of the Gag polyprotein most of the time. Ribosomal frameshifting at the gag-pol genes boundary occurs at low frequency and produces the Gag-Pol polyprotein. This strategy of translation probably allows the virus to modulate the quantity of each viral protein. Maintenance of a correct Gag to Gag-Pol ratio is essential for RNA dimerization and viral infectivity.</text>
</comment>
<comment type="domain">
    <text evidence="1">Late-budding domains (L domains) are short sequence motifs essential for viral particle budding. They recruit proteins of the host ESCRT machinery (Endosomal Sorting Complex Required for Transport) or ESCRT-associated proteins. p6-gag contains one L domains: a PTAP/PSAP motif, which interacts with the UEV domain of TSG101 (By similarity).</text>
</comment>
<comment type="PTM">
    <text evidence="6">Gag-Pol polyprotein: Specific enzymatic cleavages by the viral protease yield mature proteins.</text>
</comment>
<comment type="PTM">
    <molecule>Matrix protein p17</molecule>
    <text evidence="5">Tyrosine phosphorylated presumably in the virion by a host kinase. Phosphorylation is apparently not a major regulator of membrane association.</text>
</comment>
<comment type="PTM">
    <text evidence="6">Capsid protein p24 is phosphorylated possibly by host MAPK1; this phosphorylation is necessary for Pin1-mediated virion uncoating.</text>
</comment>
<comment type="PTM">
    <text evidence="2">Nucleocapsid protein p7 is methylated by host PRMT6, impairing its function by reducing RNA annealing and the initiation of reverse transcription.</text>
</comment>
<comment type="miscellaneous">
    <text>This isolate is from a German AIDS patient (with predominantly neurological complications) who was probably infected in Mali.</text>
</comment>
<comment type="miscellaneous">
    <molecule>Isoform Gag polyprotein</molecule>
    <text>Produced by conventional translation.</text>
</comment>
<comment type="similarity">
    <text evidence="11">Belongs to the primate lentivirus group gag polyprotein family.</text>
</comment>
<evidence type="ECO:0000250" key="1"/>
<evidence type="ECO:0000250" key="2">
    <source>
        <dbReference type="UniProtKB" id="P03347"/>
    </source>
</evidence>
<evidence type="ECO:0000250" key="3">
    <source>
        <dbReference type="UniProtKB" id="P03348"/>
    </source>
</evidence>
<evidence type="ECO:0000250" key="4">
    <source>
        <dbReference type="UniProtKB" id="P03349"/>
    </source>
</evidence>
<evidence type="ECO:0000250" key="5">
    <source>
        <dbReference type="UniProtKB" id="P04591"/>
    </source>
</evidence>
<evidence type="ECO:0000250" key="6">
    <source>
        <dbReference type="UniProtKB" id="P12493"/>
    </source>
</evidence>
<evidence type="ECO:0000250" key="7">
    <source>
        <dbReference type="UniProtKB" id="P12497"/>
    </source>
</evidence>
<evidence type="ECO:0000255" key="8">
    <source>
        <dbReference type="PROSITE-ProRule" id="PRU00047"/>
    </source>
</evidence>
<evidence type="ECO:0000256" key="9">
    <source>
        <dbReference type="SAM" id="MobiDB-lite"/>
    </source>
</evidence>
<evidence type="ECO:0000269" key="10">
    <source>
    </source>
</evidence>
<evidence type="ECO:0000305" key="11"/>